<name>M2_I72A4</name>
<dbReference type="EMBL" id="CY008677">
    <property type="protein sequence ID" value="ABD17325.1"/>
    <property type="molecule type" value="Genomic_RNA"/>
</dbReference>
<dbReference type="SMR" id="P0C2M3"/>
<dbReference type="GlyCosmos" id="P0C2M3">
    <property type="glycosylation" value="1 site, No reported glycans"/>
</dbReference>
<dbReference type="Proteomes" id="UP000009189">
    <property type="component" value="Genome"/>
</dbReference>
<dbReference type="GO" id="GO:0020002">
    <property type="term" value="C:host cell plasma membrane"/>
    <property type="evidence" value="ECO:0007669"/>
    <property type="project" value="UniProtKB-SubCell"/>
</dbReference>
<dbReference type="GO" id="GO:0016020">
    <property type="term" value="C:membrane"/>
    <property type="evidence" value="ECO:0007669"/>
    <property type="project" value="UniProtKB-UniRule"/>
</dbReference>
<dbReference type="GO" id="GO:0055036">
    <property type="term" value="C:virion membrane"/>
    <property type="evidence" value="ECO:0007669"/>
    <property type="project" value="UniProtKB-SubCell"/>
</dbReference>
<dbReference type="GO" id="GO:0005216">
    <property type="term" value="F:monoatomic ion channel activity"/>
    <property type="evidence" value="ECO:0007669"/>
    <property type="project" value="UniProtKB-UniRule"/>
</dbReference>
<dbReference type="GO" id="GO:0015078">
    <property type="term" value="F:proton transmembrane transporter activity"/>
    <property type="evidence" value="ECO:0007669"/>
    <property type="project" value="UniProtKB-UniRule"/>
</dbReference>
<dbReference type="GO" id="GO:0051259">
    <property type="term" value="P:protein complex oligomerization"/>
    <property type="evidence" value="ECO:0007669"/>
    <property type="project" value="UniProtKB-UniRule"/>
</dbReference>
<dbReference type="GO" id="GO:0044694">
    <property type="term" value="P:symbiont genome entry into host cell via pore formation in plasma membrane"/>
    <property type="evidence" value="ECO:0007669"/>
    <property type="project" value="UniProtKB-UniRule"/>
</dbReference>
<dbReference type="GO" id="GO:0140321">
    <property type="term" value="P:symbiont-mediated suppression of host autophagy"/>
    <property type="evidence" value="ECO:0007669"/>
    <property type="project" value="UniProtKB-KW"/>
</dbReference>
<dbReference type="Gene3D" id="6.10.250.1640">
    <property type="match status" value="1"/>
</dbReference>
<dbReference type="HAMAP" id="MF_04069">
    <property type="entry name" value="INFV_M2"/>
    <property type="match status" value="1"/>
</dbReference>
<dbReference type="InterPro" id="IPR002089">
    <property type="entry name" value="Flu_M2"/>
</dbReference>
<dbReference type="Pfam" id="PF00599">
    <property type="entry name" value="Flu_M2"/>
    <property type="match status" value="1"/>
</dbReference>
<comment type="function">
    <text evidence="1">Forms a proton-selective ion channel that is necessary for the efficient release of the viral genome during virus entry. After attaching to the cell surface, the virion enters the cell by endocytosis. Acidification of the endosome triggers M2 ion channel activity. The influx of protons into virion interior is believed to disrupt interactions between the viral ribonucleoprotein (RNP), matrix protein 1 (M1), and lipid bilayers, thereby freeing the viral genome from interaction with viral proteins and enabling RNA segments to migrate to the host cell nucleus, where influenza virus RNA transcription and replication occur. Also plays a role in viral proteins secretory pathway. Elevates the intravesicular pH of normally acidic compartments, such as trans-Golgi network, preventing newly formed hemagglutinin from premature switching to the fusion-active conformation.</text>
</comment>
<comment type="activity regulation">
    <text>The M2 protein from most influenza A strains is inhibited by amantadine and rimantadine, resulting in viral uncoating incapacity. Emergence of amantadine-resistant variants is usually rapid.</text>
</comment>
<comment type="subunit">
    <text evidence="1">Homotetramer; composed of two disulfide-linked dimers held together by non-covalent interactions. May interact with matrix protein 1.</text>
</comment>
<comment type="subcellular location">
    <subcellularLocation>
        <location evidence="1">Virion membrane</location>
    </subcellularLocation>
    <subcellularLocation>
        <location evidence="1">Host apical cell membrane</location>
        <topology evidence="1">Single-pass type III membrane protein</topology>
    </subcellularLocation>
    <text evidence="1">Abundantly expressed at the apical plasma membrane in infected polarized epithelial cells, in close proximity to budding and assembled virions. Minor component of virions (only 16-20 molecules/virion).</text>
</comment>
<comment type="alternative products">
    <event type="alternative splicing"/>
    <isoform>
        <id>P0C2M3-1</id>
        <name>M2</name>
        <sequence type="displayed"/>
    </isoform>
    <isoform>
        <id>Q2ICQ8-1</id>
        <name>M1</name>
        <sequence type="external"/>
    </isoform>
    <text>Only the first 9 residues are shared by the 2 isoforms.</text>
</comment>
<comment type="domain">
    <text evidence="1">Cytoplasmic tail plays an important role in virion assembly and morphogenesis.</text>
</comment>
<comment type="miscellaneous">
    <text evidence="1">When the channel is activated, one or more imidazole moieties of His-37 probably become bi-protonated.</text>
</comment>
<comment type="similarity">
    <text evidence="1">Belongs to the influenza viruses matrix protein M2 family.</text>
</comment>
<sequence>MSLLTEVETPIRNEWGCRCNDSSDPLVVAASIIGILHLILWILDRLFFKCIYRFFEHGLKRGPSTEGVPESMREEYRKEQQSAVDADDSHFVSIEL</sequence>
<gene>
    <name evidence="1" type="primary">M</name>
</gene>
<protein>
    <recommendedName>
        <fullName evidence="1">Matrix protein 2</fullName>
    </recommendedName>
    <alternativeName>
        <fullName evidence="1">Proton channel protein M2</fullName>
    </alternativeName>
</protein>
<proteinExistence type="inferred from homology"/>
<accession>P0C2M3</accession>
<keyword id="KW-0025">Alternative splicing</keyword>
<keyword id="KW-1015">Disulfide bond</keyword>
<keyword id="KW-0325">Glycoprotein</keyword>
<keyword id="KW-1032">Host cell membrane</keyword>
<keyword id="KW-1043">Host membrane</keyword>
<keyword id="KW-0945">Host-virus interaction</keyword>
<keyword id="KW-0375">Hydrogen ion transport</keyword>
<keyword id="KW-1083">Inhibition of host autophagy by virus</keyword>
<keyword id="KW-0407">Ion channel</keyword>
<keyword id="KW-0406">Ion transport</keyword>
<keyword id="KW-0449">Lipoprotein</keyword>
<keyword id="KW-0472">Membrane</keyword>
<keyword id="KW-0564">Palmitate</keyword>
<keyword id="KW-0597">Phosphoprotein</keyword>
<keyword id="KW-0735">Signal-anchor</keyword>
<keyword id="KW-0812">Transmembrane</keyword>
<keyword id="KW-1133">Transmembrane helix</keyword>
<keyword id="KW-0813">Transport</keyword>
<keyword id="KW-1182">Viral ion channel</keyword>
<keyword id="KW-0946">Virion</keyword>
<reference key="1">
    <citation type="submission" date="2006-02" db="EMBL/GenBank/DDBJ databases">
        <title>The NIAID influenza genome sequencing project.</title>
        <authorList>
            <person name="Ghedin E."/>
            <person name="Spiro D."/>
            <person name="Miller N."/>
            <person name="Zaborsky J."/>
            <person name="Feldblyum T."/>
            <person name="Subbu V."/>
            <person name="Shumway M."/>
            <person name="Sparenborg J."/>
            <person name="Groveman L."/>
            <person name="Halpin R."/>
            <person name="Sitz J."/>
            <person name="Koo H."/>
            <person name="Salzberg S.L."/>
            <person name="Webster R.G."/>
            <person name="Hoffmann E."/>
            <person name="Krauss S."/>
            <person name="Naeve C."/>
            <person name="Bao Y."/>
            <person name="Bolotov P."/>
            <person name="Dernovoy D."/>
            <person name="Kiryutin B."/>
            <person name="Lipman D.J."/>
            <person name="Tatusova T."/>
        </authorList>
    </citation>
    <scope>NUCLEOTIDE SEQUENCE [GENOMIC RNA]</scope>
</reference>
<organism>
    <name type="scientific">Influenza A virus (strain A/Memphis/101/1972 H3N2)</name>
    <dbReference type="NCBI Taxonomy" id="383583"/>
    <lineage>
        <taxon>Viruses</taxon>
        <taxon>Riboviria</taxon>
        <taxon>Orthornavirae</taxon>
        <taxon>Negarnaviricota</taxon>
        <taxon>Polyploviricotina</taxon>
        <taxon>Insthoviricetes</taxon>
        <taxon>Articulavirales</taxon>
        <taxon>Orthomyxoviridae</taxon>
        <taxon>Alphainfluenzavirus</taxon>
        <taxon>Alphainfluenzavirus influenzae</taxon>
        <taxon>Influenza A virus</taxon>
    </lineage>
</organism>
<feature type="chain" id="PRO_0000281019" description="Matrix protein 2">
    <location>
        <begin position="1"/>
        <end position="96"/>
    </location>
</feature>
<feature type="topological domain" description="Virion surface" evidence="1">
    <location>
        <begin position="1"/>
        <end position="22"/>
    </location>
</feature>
<feature type="transmembrane region" description="Helical; Signal-anchor for type III membrane protein" evidence="1">
    <location>
        <begin position="23"/>
        <end position="43"/>
    </location>
</feature>
<feature type="topological domain" description="Intravirion" evidence="1">
    <location>
        <begin position="44"/>
        <end position="96"/>
    </location>
</feature>
<feature type="region of interest" description="Disordered" evidence="2">
    <location>
        <begin position="60"/>
        <end position="96"/>
    </location>
</feature>
<feature type="compositionally biased region" description="Basic and acidic residues" evidence="2">
    <location>
        <begin position="71"/>
        <end position="80"/>
    </location>
</feature>
<feature type="site" description="Essential for channel activity, possibly by being protonated during channel activation, and by forming the channel gate and the selective filter" evidence="1">
    <location>
        <position position="37"/>
    </location>
</feature>
<feature type="site" description="Seems to be involved in pH gating" evidence="1">
    <location>
        <position position="41"/>
    </location>
</feature>
<feature type="modified residue" description="Phosphoserine; by host" evidence="1">
    <location>
        <position position="64"/>
    </location>
</feature>
<feature type="modified residue" description="Phosphoserine; by host" evidence="1">
    <location>
        <position position="82"/>
    </location>
</feature>
<feature type="modified residue" description="Phosphoserine; by host" evidence="1">
    <location>
        <position position="93"/>
    </location>
</feature>
<feature type="lipid moiety-binding region" description="S-palmitoyl cysteine; by host" evidence="1">
    <location>
        <position position="50"/>
    </location>
</feature>
<feature type="glycosylation site" description="N-linked (GlcNAc...) asparagine; by host" evidence="1">
    <location>
        <position position="20"/>
    </location>
</feature>
<feature type="disulfide bond" description="Interchain (with C-17)" evidence="1">
    <location>
        <position position="17"/>
    </location>
</feature>
<feature type="disulfide bond" description="Interchain (with C-19)" evidence="1">
    <location>
        <position position="19"/>
    </location>
</feature>
<evidence type="ECO:0000255" key="1">
    <source>
        <dbReference type="HAMAP-Rule" id="MF_04069"/>
    </source>
</evidence>
<evidence type="ECO:0000256" key="2">
    <source>
        <dbReference type="SAM" id="MobiDB-lite"/>
    </source>
</evidence>
<organismHost>
    <name type="scientific">Aves</name>
    <dbReference type="NCBI Taxonomy" id="8782"/>
</organismHost>
<organismHost>
    <name type="scientific">Cetacea</name>
    <name type="common">whales</name>
    <dbReference type="NCBI Taxonomy" id="9721"/>
</organismHost>
<organismHost>
    <name type="scientific">Homo sapiens</name>
    <name type="common">Human</name>
    <dbReference type="NCBI Taxonomy" id="9606"/>
</organismHost>
<organismHost>
    <name type="scientific">Phocidae</name>
    <name type="common">true seals</name>
    <dbReference type="NCBI Taxonomy" id="9709"/>
</organismHost>
<organismHost>
    <name type="scientific">Sus scrofa</name>
    <name type="common">Pig</name>
    <dbReference type="NCBI Taxonomy" id="9823"/>
</organismHost>